<organism>
    <name type="scientific">Pongo abelii</name>
    <name type="common">Sumatran orangutan</name>
    <name type="synonym">Pongo pygmaeus abelii</name>
    <dbReference type="NCBI Taxonomy" id="9601"/>
    <lineage>
        <taxon>Eukaryota</taxon>
        <taxon>Metazoa</taxon>
        <taxon>Chordata</taxon>
        <taxon>Craniata</taxon>
        <taxon>Vertebrata</taxon>
        <taxon>Euteleostomi</taxon>
        <taxon>Mammalia</taxon>
        <taxon>Eutheria</taxon>
        <taxon>Euarchontoglires</taxon>
        <taxon>Primates</taxon>
        <taxon>Haplorrhini</taxon>
        <taxon>Catarrhini</taxon>
        <taxon>Hominidae</taxon>
        <taxon>Pongo</taxon>
    </lineage>
</organism>
<sequence>MEGSKTSNNSTMQVSFVCQRCSQPLKLDTSFKILDRVTIQELTAPLLTTAQAKPGETQEEETNSGEEPFIETPRQDGVSRRFIPPARMMSTESANSFTLIGEASDGGTMENLSRRLKVTGDLFDIMSGQTDVDHPLCEECTDTLLDQLDTQLNVTENECQNYKRCLEILEQMNEDDSEQLQMELKELALEEERLIQELEDVEKNRKIVAENLEKVQAEAERLDQEEAQYQREYSEFKRQQLELDDELKSVENQMRYAQMQLDKLKKTNVFNATFHIWHSGQFGTINNFRLGRLPSVPVEWNEINAAWGQTVLLLHALANKMGLKFQRYRLVPYGNHSYLESLTDKSKELPLYCSGGLRFFWDNKFDHAMVAFLDCVQQFKEEVEKGETRFCLPYRMDVEKGKIEDTGGSGGSYSIKTQFNSEEQWTKALKFMLTNLKWGLAWVSSQFYNK</sequence>
<gene>
    <name type="primary">BECN1</name>
</gene>
<feature type="chain" id="PRO_0000289996" description="Beclin-1">
    <location>
        <begin position="1"/>
        <end position="450"/>
    </location>
</feature>
<feature type="chain" id="PRO_0000435042" description="Beclin-1-C 37 kDa" evidence="2">
    <location>
        <begin position="134"/>
        <end position="450"/>
    </location>
</feature>
<feature type="chain" id="PRO_0000435043" description="Beclin-1-C 35 kDa" evidence="2">
    <location>
        <begin position="150"/>
        <end position="450"/>
    </location>
</feature>
<feature type="region of interest" description="Disordered" evidence="5">
    <location>
        <begin position="48"/>
        <end position="72"/>
    </location>
</feature>
<feature type="region of interest" description="Interaction with BCL2 and BCL2L1" evidence="2">
    <location>
        <begin position="112"/>
        <end position="159"/>
    </location>
</feature>
<feature type="region of interest" description="Evolutionary conserved domain (ECD)" evidence="2">
    <location>
        <begin position="245"/>
        <end position="450"/>
    </location>
</feature>
<feature type="region of interest" description="Required for membrane-association" evidence="2">
    <location>
        <begin position="425"/>
        <end position="450"/>
    </location>
</feature>
<feature type="coiled-coil region" evidence="4">
    <location>
        <begin position="142"/>
        <end position="269"/>
    </location>
</feature>
<feature type="short sequence motif" description="BH3" evidence="2">
    <location>
        <begin position="108"/>
        <end position="127"/>
    </location>
</feature>
<feature type="modified residue" description="N-acetylmethionine" evidence="2">
    <location>
        <position position="1"/>
    </location>
</feature>
<feature type="modified residue" description="Phosphoserine" evidence="2">
    <location>
        <position position="15"/>
    </location>
</feature>
<feature type="modified residue" description="Phosphoserine" evidence="2">
    <location>
        <position position="30"/>
    </location>
</feature>
<feature type="modified residue" description="Phosphoserine; by AMPK" evidence="2">
    <location>
        <position position="90"/>
    </location>
</feature>
<feature type="modified residue" description="Phosphoserine; by AMPK" evidence="2">
    <location>
        <position position="93"/>
    </location>
</feature>
<feature type="modified residue" description="Phosphoserine; by AMPK" evidence="1">
    <location>
        <position position="96"/>
    </location>
</feature>
<feature type="modified residue" description="Phosphothreonine; by DAPK1" evidence="2">
    <location>
        <position position="119"/>
    </location>
</feature>
<feature type="cross-link" description="Glycyl lysine isopeptide (Lys-Gly) (interchain with G-Cter in ubiquitin)" evidence="2">
    <location>
        <position position="402"/>
    </location>
</feature>
<feature type="cross-link" description="Glycyl lysine isopeptide (Lys-Gly) (interchain with G-Cter in ubiquitin)" evidence="2">
    <location>
        <position position="437"/>
    </location>
</feature>
<reference key="1">
    <citation type="submission" date="2004-11" db="EMBL/GenBank/DDBJ databases">
        <authorList>
            <consortium name="The German cDNA consortium"/>
        </authorList>
    </citation>
    <scope>NUCLEOTIDE SEQUENCE [LARGE SCALE MRNA]</scope>
    <source>
        <tissue>Brain cortex</tissue>
    </source>
</reference>
<evidence type="ECO:0000250" key="1">
    <source>
        <dbReference type="UniProtKB" id="O88597"/>
    </source>
</evidence>
<evidence type="ECO:0000250" key="2">
    <source>
        <dbReference type="UniProtKB" id="Q14457"/>
    </source>
</evidence>
<evidence type="ECO:0000250" key="3">
    <source>
        <dbReference type="UniProtKB" id="Q91XJ1"/>
    </source>
</evidence>
<evidence type="ECO:0000255" key="4"/>
<evidence type="ECO:0000256" key="5">
    <source>
        <dbReference type="SAM" id="MobiDB-lite"/>
    </source>
</evidence>
<evidence type="ECO:0000305" key="6"/>
<proteinExistence type="evidence at transcript level"/>
<comment type="function">
    <text evidence="1 2 3">Plays a central role in autophagy. Acts as a core subunit of the PI3K complex that mediates formation of phosphatidylinositol 3-phosphate; different complex forms are believed to play a role in multiple membrane trafficking pathways: PI3KC3-C1 is involved in initiation of autophagosomes and PI3KC3-C2 in maturation of autophagosomes and endocytosis. Involved in regulation of degradative endocytic trafficking and required for the abscission step in cytokinesis, probably in the context of PI3KC3-C2. Essential for the formation of PI3KC3-C2 but not PI3KC3-C1 PI3K complex forms. Involved in endocytosis. May play a role in antiviral host defense (By similarity).</text>
</comment>
<comment type="function">
    <text evidence="1 2">Beclin-1-C 35 kDa localized to mitochondria can promote apoptosis; it induces the mitochondrial translocation of BAX and the release of proapoptotic factors.</text>
</comment>
<comment type="subunit">
    <text evidence="1 2 3">A homodimeric form is proposed to exist; this metastable form readily transits to ATG14- or UVRAG-containing complexes with BECN1:UVRAG being more stable than BECN1:ATG14 (By similarity). Component of the PI3K (PI3KC3/PI3K-III/class III phosphatidylinositol 3-kinase) complex the core of which is composed of the catalytic subunit PIK3C3, the regulatory subunit PIK3R4 and BECN1 associating with additional regulatory/auxiliary subunits to form alternative complex forms. Alternative complex forms containing a fourth regulatory subunit in a mutually exclusive manner are PI3K complex I (PI3KC3-C1) containing ATG14, and PI3K complex II (PI3KC3-C2) containing UVRAG. PI3KC3-C1 displays a V-shaped architecture with PIK3R4 serving as a bridge between PIK3C3 and the ATG14:BECN1 subcomplex. Both, PI3KC3-C1 and PI3KC3-C2, can associate with further regulatory subunits, such as RUBCN, SH3GLB1/Bif-1 and AMBRA1 (By similarity). PI3KC3-C1 probably associates with PIK3CB (By similarity). Forms a complex with PPP2CA and AMBRA1; AMBRA1 and BECN1 components of the complex regulate MYC stability via different pathways. Component of the complex, at least composed of LRPPRC, BECN1 and BCL2; the interactions prevent BECN1 from forming an autophagy-inducing complex with PIK3C3 (By similarity). Interacts with AMBRA1, GOPC, GRID2 (By similarity). Interacts with BCL2 and BCL2L1 isoform Bcl-X(L); the interaction inhibits BECN1 function in promoting autophagy by interfering with the formation of the PI3K complex. Interacts with cytosolic HMGB1; inhibits the interaction of BECN1 and BCL2 leading to promotion of autophagy. Interacts with USP10, USP13, VMP1, DAPK1, RAB39A. Interacts with the poly-Gln domain of ATXN3; the interaction causes deubiquitination at Lys-402 and stabilizes BECN1. Interacts with SLAMF1. Interacts with TRIM5; the interaction causes activation of BECN1 by causing its dissociation from its inhibitors BCL2 and TAB2. Interacts with active ULK1 (phosphorylated on 'Ser-317') and MEFV simultaneously. Interacts with WDR81 and WDR91; negatively regulates the PI3 kinase/PI3K activity associated with endosomal membranes. Interacts with LAPTM4B; competes with EGFR for LAPTM4B binding; regulates EGFR activity. Interacts with TRIM50. Interacts with TRIM16. Interacts with ATG14; this interaction is increased in the absence of TMEM39A (By similarity). Interacts with WASHC1; preventing interaction with AMBRA1 and the DCX(AMBRA1) complex and subsequent ubiquitination (By similarity). Interacts with TRIM17 (By similarity). Interacts with BCL2L10/BCL-B (via BH1 domain) (By similarity). Interacts with SH3BGRL (By similarity). Interacts with IRGM; enhancing BECN1-interacting partners and influencing the composition of the BECN1 complex (By similarity). Interacts with ARMC3 (By similarity). Interacts with LRPPRC (By similarity).</text>
</comment>
<comment type="subcellular location">
    <subcellularLocation>
        <location evidence="1">Cytoplasm</location>
    </subcellularLocation>
    <subcellularLocation>
        <location evidence="2">Golgi apparatus</location>
        <location evidence="2">trans-Golgi network membrane</location>
        <topology evidence="2">Peripheral membrane protein</topology>
    </subcellularLocation>
    <subcellularLocation>
        <location evidence="2">Endosome membrane</location>
        <topology evidence="2">Peripheral membrane protein</topology>
    </subcellularLocation>
    <subcellularLocation>
        <location evidence="2">Endoplasmic reticulum membrane</location>
        <topology evidence="2">Peripheral membrane protein</topology>
    </subcellularLocation>
    <subcellularLocation>
        <location evidence="2">Mitochondrion membrane</location>
        <topology evidence="2">Peripheral membrane protein</topology>
    </subcellularLocation>
    <subcellularLocation>
        <location evidence="6">Cytoplasmic vesicle</location>
        <location evidence="6">Autophagosome</location>
    </subcellularLocation>
    <text evidence="1 2">Interaction with ATG14 promotes translocation to autophagosomes. Expressed in dendrites and cell bodies of cerebellar Purkinje cells.</text>
</comment>
<comment type="subcellular location">
    <molecule>Beclin-1-C 35 kDa</molecule>
    <subcellularLocation>
        <location evidence="1 2">Mitochondrion</location>
    </subcellularLocation>
    <subcellularLocation>
        <location evidence="2">Nucleus</location>
    </subcellularLocation>
    <subcellularLocation>
        <location evidence="2">Cytoplasm</location>
    </subcellularLocation>
</comment>
<comment type="subcellular location">
    <molecule>Beclin-1-C 37 kDa</molecule>
    <subcellularLocation>
        <location evidence="1">Mitochondrion</location>
    </subcellularLocation>
</comment>
<comment type="domain">
    <text evidence="2">The C-terminal evolutionary conserved domain (ECD) contains poly-Gln-binding domains such as the ATXN3 poly-Gln motif, consistent with structural docking models revealing two highly scored poly-Gln-binding pockets in the ECD (By similarity). As some binding is observed with BECN1 lacking the ECD, other domains of BECN1 may also interact with ATXN3 (By similarity).</text>
</comment>
<comment type="PTM">
    <text evidence="1 2">Phosphorylation at Thr-119 by DAPK1 reduces its interaction with BCL2 and BCL2L1 and promotes induction of autophagy. In response to autophagic stimuli, phosphorylated at serine residues by AMPK in an ATG14-dependent manner, and this phosphorylation is critical for maximally efficient autophagy.</text>
</comment>
<comment type="PTM">
    <text evidence="2">Polyubiquitinated by NEDD4, both with 'Lys-11'- and 'Lys-63'-linkages (By similarity). 'Lys-11'-linked polyubiquitination leads to degradation and is enhanced when the stabilizing interaction partner VPS34 is depleted (By similarity). Deubiquitinated by USP10 and USP13, leading to stabilize the PIK3C3/VPS34-containing complexes (By similarity). Polyubiquitinated at Lys-402 with 'Lys-48'-linkages (By similarity). 'Lys-48'-linked polyubiquitination of Lys-402 leads to degradation (By similarity). Deubiquitinated by ATXN3, leading to stabilization (By similarity). Ubiquitinated at Lys-437 via 'Lys-63'-linkage by the DCX(AMBRA1) complex, thereby increasing the association between BECN1 and PIK3C3 to promote PIK3C3 activity (By similarity). 'Lys-48'-linked ubiquitination by RNF216 leads to proteasomal degradation and autophagy inhibition (By similarity).</text>
</comment>
<comment type="PTM">
    <text evidence="1 2">Proteolytically processed by caspases including CASP8 and CASP3; the C-terminal fragments lack autophagy-inducing capacity and are proposed to induce apoptosis. Thus the cleavage is proposed to be an determinant to switch from autophagy to apoptosis pathways affecting cellular homeostasis including viral infections and survival of tumor cells.</text>
</comment>
<comment type="miscellaneous">
    <text evidence="2">Expanded poly-Gln tracts inhibit ATXN3-BECN1 interaction, decrease BECN1 levels and impair starvation-induced autophagy (By similarity).</text>
</comment>
<comment type="similarity">
    <text evidence="6">Belongs to the beclin family.</text>
</comment>
<keyword id="KW-0007">Acetylation</keyword>
<keyword id="KW-0051">Antiviral defense</keyword>
<keyword id="KW-0053">Apoptosis</keyword>
<keyword id="KW-0072">Autophagy</keyword>
<keyword id="KW-0131">Cell cycle</keyword>
<keyword id="KW-0132">Cell division</keyword>
<keyword id="KW-0175">Coiled coil</keyword>
<keyword id="KW-0963">Cytoplasm</keyword>
<keyword id="KW-0968">Cytoplasmic vesicle</keyword>
<keyword id="KW-0256">Endoplasmic reticulum</keyword>
<keyword id="KW-0967">Endosome</keyword>
<keyword id="KW-0333">Golgi apparatus</keyword>
<keyword id="KW-1017">Isopeptide bond</keyword>
<keyword id="KW-0472">Membrane</keyword>
<keyword id="KW-0496">Mitochondrion</keyword>
<keyword id="KW-0539">Nucleus</keyword>
<keyword id="KW-0597">Phosphoprotein</keyword>
<keyword id="KW-1185">Reference proteome</keyword>
<keyword id="KW-0832">Ubl conjugation</keyword>
<protein>
    <recommendedName>
        <fullName>Beclin-1</fullName>
    </recommendedName>
    <component>
        <recommendedName>
            <fullName>Beclin-1-C 35 kDa</fullName>
        </recommendedName>
    </component>
    <component>
        <recommendedName>
            <fullName>Beclin-1-C 37 kDa</fullName>
        </recommendedName>
    </component>
</protein>
<dbReference type="EMBL" id="CR859876">
    <property type="protein sequence ID" value="CAH92032.1"/>
    <property type="molecule type" value="mRNA"/>
</dbReference>
<dbReference type="RefSeq" id="NP_001126181.1">
    <property type="nucleotide sequence ID" value="NM_001132709.1"/>
</dbReference>
<dbReference type="RefSeq" id="XP_024089991.1">
    <property type="nucleotide sequence ID" value="XM_024234223.3"/>
</dbReference>
<dbReference type="RefSeq" id="XP_054402207.1">
    <property type="nucleotide sequence ID" value="XM_054546232.2"/>
</dbReference>
<dbReference type="RefSeq" id="XP_054402208.1">
    <property type="nucleotide sequence ID" value="XM_054546233.2"/>
</dbReference>
<dbReference type="RefSeq" id="XP_063573951.1">
    <property type="nucleotide sequence ID" value="XM_063717881.1"/>
</dbReference>
<dbReference type="RefSeq" id="XP_063573952.1">
    <property type="nucleotide sequence ID" value="XM_063717882.1"/>
</dbReference>
<dbReference type="SMR" id="Q5R878"/>
<dbReference type="FunCoup" id="Q5R878">
    <property type="interactions" value="3519"/>
</dbReference>
<dbReference type="STRING" id="9601.ENSPPYP00000009414"/>
<dbReference type="Ensembl" id="ENSPPYT00000009792.2">
    <property type="protein sequence ID" value="ENSPPYP00000009414.2"/>
    <property type="gene ID" value="ENSPPYG00000008373.3"/>
</dbReference>
<dbReference type="GeneID" id="100173145"/>
<dbReference type="KEGG" id="pon:100173145"/>
<dbReference type="CTD" id="8678"/>
<dbReference type="eggNOG" id="KOG2751">
    <property type="taxonomic scope" value="Eukaryota"/>
</dbReference>
<dbReference type="GeneTree" id="ENSGT00390000008164"/>
<dbReference type="InParanoid" id="Q5R878"/>
<dbReference type="OMA" id="EWDVYKA"/>
<dbReference type="OrthoDB" id="20368at2759"/>
<dbReference type="Proteomes" id="UP000001595">
    <property type="component" value="Chromosome 17"/>
</dbReference>
<dbReference type="GO" id="GO:0005776">
    <property type="term" value="C:autophagosome"/>
    <property type="evidence" value="ECO:0007669"/>
    <property type="project" value="UniProtKB-SubCell"/>
</dbReference>
<dbReference type="GO" id="GO:0032473">
    <property type="term" value="C:cytoplasmic side of mitochondrial outer membrane"/>
    <property type="evidence" value="ECO:0007669"/>
    <property type="project" value="Ensembl"/>
</dbReference>
<dbReference type="GO" id="GO:0005829">
    <property type="term" value="C:cytosol"/>
    <property type="evidence" value="ECO:0007669"/>
    <property type="project" value="Ensembl"/>
</dbReference>
<dbReference type="GO" id="GO:0005789">
    <property type="term" value="C:endoplasmic reticulum membrane"/>
    <property type="evidence" value="ECO:0007669"/>
    <property type="project" value="UniProtKB-SubCell"/>
</dbReference>
<dbReference type="GO" id="GO:0010008">
    <property type="term" value="C:endosome membrane"/>
    <property type="evidence" value="ECO:0007669"/>
    <property type="project" value="UniProtKB-SubCell"/>
</dbReference>
<dbReference type="GO" id="GO:0016604">
    <property type="term" value="C:nuclear body"/>
    <property type="evidence" value="ECO:0007669"/>
    <property type="project" value="Ensembl"/>
</dbReference>
<dbReference type="GO" id="GO:0045335">
    <property type="term" value="C:phagocytic vesicle"/>
    <property type="evidence" value="ECO:0007669"/>
    <property type="project" value="Ensembl"/>
</dbReference>
<dbReference type="GO" id="GO:0000407">
    <property type="term" value="C:phagophore assembly site"/>
    <property type="evidence" value="ECO:0007669"/>
    <property type="project" value="TreeGrafter"/>
</dbReference>
<dbReference type="GO" id="GO:0035032">
    <property type="term" value="C:phosphatidylinositol 3-kinase complex, class III"/>
    <property type="evidence" value="ECO:0000250"/>
    <property type="project" value="UniProtKB"/>
</dbReference>
<dbReference type="GO" id="GO:0034271">
    <property type="term" value="C:phosphatidylinositol 3-kinase complex, class III, type I"/>
    <property type="evidence" value="ECO:0007669"/>
    <property type="project" value="TreeGrafter"/>
</dbReference>
<dbReference type="GO" id="GO:0034272">
    <property type="term" value="C:phosphatidylinositol 3-kinase complex, class III, type II"/>
    <property type="evidence" value="ECO:0007669"/>
    <property type="project" value="TreeGrafter"/>
</dbReference>
<dbReference type="GO" id="GO:0005802">
    <property type="term" value="C:trans-Golgi network"/>
    <property type="evidence" value="ECO:0007669"/>
    <property type="project" value="Ensembl"/>
</dbReference>
<dbReference type="GO" id="GO:0051020">
    <property type="term" value="F:GTPase binding"/>
    <property type="evidence" value="ECO:0007669"/>
    <property type="project" value="Ensembl"/>
</dbReference>
<dbReference type="GO" id="GO:0042802">
    <property type="term" value="F:identical protein binding"/>
    <property type="evidence" value="ECO:0007669"/>
    <property type="project" value="Ensembl"/>
</dbReference>
<dbReference type="GO" id="GO:0043548">
    <property type="term" value="F:phosphatidylinositol 3-kinase binding"/>
    <property type="evidence" value="ECO:0007669"/>
    <property type="project" value="Ensembl"/>
</dbReference>
<dbReference type="GO" id="GO:0019901">
    <property type="term" value="F:protein kinase binding"/>
    <property type="evidence" value="ECO:0007669"/>
    <property type="project" value="Ensembl"/>
</dbReference>
<dbReference type="GO" id="GO:0030674">
    <property type="term" value="F:protein-macromolecule adaptor activity"/>
    <property type="evidence" value="ECO:0007669"/>
    <property type="project" value="Ensembl"/>
</dbReference>
<dbReference type="GO" id="GO:0031625">
    <property type="term" value="F:ubiquitin protein ligase binding"/>
    <property type="evidence" value="ECO:0007669"/>
    <property type="project" value="Ensembl"/>
</dbReference>
<dbReference type="GO" id="GO:0050435">
    <property type="term" value="P:amyloid-beta metabolic process"/>
    <property type="evidence" value="ECO:0007669"/>
    <property type="project" value="Ensembl"/>
</dbReference>
<dbReference type="GO" id="GO:0006915">
    <property type="term" value="P:apoptotic process"/>
    <property type="evidence" value="ECO:0007669"/>
    <property type="project" value="UniProtKB-KW"/>
</dbReference>
<dbReference type="GO" id="GO:0000045">
    <property type="term" value="P:autophagosome assembly"/>
    <property type="evidence" value="ECO:0000250"/>
    <property type="project" value="UniProtKB"/>
</dbReference>
<dbReference type="GO" id="GO:0097352">
    <property type="term" value="P:autophagosome maturation"/>
    <property type="evidence" value="ECO:0007669"/>
    <property type="project" value="Ensembl"/>
</dbReference>
<dbReference type="GO" id="GO:0006914">
    <property type="term" value="P:autophagy"/>
    <property type="evidence" value="ECO:0000250"/>
    <property type="project" value="UniProtKB"/>
</dbReference>
<dbReference type="GO" id="GO:0051301">
    <property type="term" value="P:cell division"/>
    <property type="evidence" value="ECO:0007669"/>
    <property type="project" value="UniProtKB-KW"/>
</dbReference>
<dbReference type="GO" id="GO:0042149">
    <property type="term" value="P:cellular response to glucose starvation"/>
    <property type="evidence" value="ECO:0000250"/>
    <property type="project" value="UniProtKB"/>
</dbReference>
<dbReference type="GO" id="GO:0006995">
    <property type="term" value="P:cellular response to nitrogen starvation"/>
    <property type="evidence" value="ECO:0007669"/>
    <property type="project" value="TreeGrafter"/>
</dbReference>
<dbReference type="GO" id="GO:0002753">
    <property type="term" value="P:cytoplasmic pattern recognition receptor signaling pathway"/>
    <property type="evidence" value="ECO:0007669"/>
    <property type="project" value="Ensembl"/>
</dbReference>
<dbReference type="GO" id="GO:0051607">
    <property type="term" value="P:defense response to virus"/>
    <property type="evidence" value="ECO:0007669"/>
    <property type="project" value="UniProtKB-KW"/>
</dbReference>
<dbReference type="GO" id="GO:0045022">
    <property type="term" value="P:early endosome to late endosome transport"/>
    <property type="evidence" value="ECO:0000250"/>
    <property type="project" value="UniProtKB"/>
</dbReference>
<dbReference type="GO" id="GO:0043652">
    <property type="term" value="P:engulfment of apoptotic cell"/>
    <property type="evidence" value="ECO:0007669"/>
    <property type="project" value="Ensembl"/>
</dbReference>
<dbReference type="GO" id="GO:0045324">
    <property type="term" value="P:late endosome to vacuole transport"/>
    <property type="evidence" value="ECO:0007669"/>
    <property type="project" value="TreeGrafter"/>
</dbReference>
<dbReference type="GO" id="GO:0007040">
    <property type="term" value="P:lysosome organization"/>
    <property type="evidence" value="ECO:0007669"/>
    <property type="project" value="Ensembl"/>
</dbReference>
<dbReference type="GO" id="GO:0016236">
    <property type="term" value="P:macroautophagy"/>
    <property type="evidence" value="ECO:0000250"/>
    <property type="project" value="UniProtKB"/>
</dbReference>
<dbReference type="GO" id="GO:0000423">
    <property type="term" value="P:mitophagy"/>
    <property type="evidence" value="ECO:0007669"/>
    <property type="project" value="Ensembl"/>
</dbReference>
<dbReference type="GO" id="GO:0007080">
    <property type="term" value="P:mitotic metaphase chromosome alignment"/>
    <property type="evidence" value="ECO:0007669"/>
    <property type="project" value="Ensembl"/>
</dbReference>
<dbReference type="GO" id="GO:1902902">
    <property type="term" value="P:negative regulation of autophagosome assembly"/>
    <property type="evidence" value="ECO:0007669"/>
    <property type="project" value="Ensembl"/>
</dbReference>
<dbReference type="GO" id="GO:0008285">
    <property type="term" value="P:negative regulation of cell population proliferation"/>
    <property type="evidence" value="ECO:0007669"/>
    <property type="project" value="Ensembl"/>
</dbReference>
<dbReference type="GO" id="GO:0043069">
    <property type="term" value="P:negative regulation of programmed cell death"/>
    <property type="evidence" value="ECO:0007669"/>
    <property type="project" value="Ensembl"/>
</dbReference>
<dbReference type="GO" id="GO:0048666">
    <property type="term" value="P:neuron development"/>
    <property type="evidence" value="ECO:0007669"/>
    <property type="project" value="Ensembl"/>
</dbReference>
<dbReference type="GO" id="GO:0036092">
    <property type="term" value="P:phosphatidylinositol-3-phosphate biosynthetic process"/>
    <property type="evidence" value="ECO:0007669"/>
    <property type="project" value="Ensembl"/>
</dbReference>
<dbReference type="GO" id="GO:1902425">
    <property type="term" value="P:positive regulation of attachment of mitotic spindle microtubules to kinetochore"/>
    <property type="evidence" value="ECO:0007669"/>
    <property type="project" value="Ensembl"/>
</dbReference>
<dbReference type="GO" id="GO:0010508">
    <property type="term" value="P:positive regulation of autophagy"/>
    <property type="evidence" value="ECO:0000250"/>
    <property type="project" value="UniProtKB"/>
</dbReference>
<dbReference type="GO" id="GO:0010613">
    <property type="term" value="P:positive regulation of cardiac muscle hypertrophy"/>
    <property type="evidence" value="ECO:0007669"/>
    <property type="project" value="Ensembl"/>
</dbReference>
<dbReference type="GO" id="GO:2001244">
    <property type="term" value="P:positive regulation of intrinsic apoptotic signaling pathway"/>
    <property type="evidence" value="ECO:0000250"/>
    <property type="project" value="UniProtKB"/>
</dbReference>
<dbReference type="GO" id="GO:0065003">
    <property type="term" value="P:protein-containing complex assembly"/>
    <property type="evidence" value="ECO:0007669"/>
    <property type="project" value="Ensembl"/>
</dbReference>
<dbReference type="GO" id="GO:0032801">
    <property type="term" value="P:receptor catabolic process"/>
    <property type="evidence" value="ECO:0007669"/>
    <property type="project" value="Ensembl"/>
</dbReference>
<dbReference type="GO" id="GO:0032465">
    <property type="term" value="P:regulation of cytokinesis"/>
    <property type="evidence" value="ECO:0000250"/>
    <property type="project" value="UniProtKB"/>
</dbReference>
<dbReference type="GO" id="GO:0098780">
    <property type="term" value="P:response to mitochondrial depolarisation"/>
    <property type="evidence" value="ECO:0007669"/>
    <property type="project" value="Ensembl"/>
</dbReference>
<dbReference type="FunFam" id="1.10.418.40:FF:000001">
    <property type="entry name" value="beclin-1 isoform X1"/>
    <property type="match status" value="1"/>
</dbReference>
<dbReference type="Gene3D" id="6.10.250.3110">
    <property type="match status" value="1"/>
</dbReference>
<dbReference type="Gene3D" id="1.10.418.40">
    <property type="entry name" value="Autophagy protein 6/Beclin 1"/>
    <property type="match status" value="1"/>
</dbReference>
<dbReference type="InterPro" id="IPR007243">
    <property type="entry name" value="Atg6/Beclin"/>
</dbReference>
<dbReference type="InterPro" id="IPR038274">
    <property type="entry name" value="Atg6/Beclin_C_sf"/>
</dbReference>
<dbReference type="InterPro" id="IPR041691">
    <property type="entry name" value="Atg6/beclin_CC"/>
</dbReference>
<dbReference type="InterPro" id="IPR040455">
    <property type="entry name" value="Atg6_BARA"/>
</dbReference>
<dbReference type="InterPro" id="IPR029318">
    <property type="entry name" value="BH3_dom"/>
</dbReference>
<dbReference type="PANTHER" id="PTHR12768">
    <property type="entry name" value="BECLIN 1"/>
    <property type="match status" value="1"/>
</dbReference>
<dbReference type="PANTHER" id="PTHR12768:SF6">
    <property type="entry name" value="BECLIN-1"/>
    <property type="match status" value="1"/>
</dbReference>
<dbReference type="Pfam" id="PF04111">
    <property type="entry name" value="APG6"/>
    <property type="match status" value="1"/>
</dbReference>
<dbReference type="Pfam" id="PF17675">
    <property type="entry name" value="APG6_N"/>
    <property type="match status" value="1"/>
</dbReference>
<dbReference type="Pfam" id="PF15285">
    <property type="entry name" value="BH3"/>
    <property type="match status" value="1"/>
</dbReference>
<accession>Q5R878</accession>
<name>BECN1_PONAB</name>